<accession>A0LPE9</accession>
<protein>
    <recommendedName>
        <fullName evidence="1">Putative regulatory protein Sfum_3631</fullName>
    </recommendedName>
</protein>
<name>Y3631_SYNFM</name>
<keyword id="KW-1185">Reference proteome</keyword>
<comment type="similarity">
    <text evidence="1">Belongs to the RemA family.</text>
</comment>
<gene>
    <name type="ordered locus">Sfum_3631</name>
</gene>
<dbReference type="EMBL" id="CP000478">
    <property type="protein sequence ID" value="ABK19301.1"/>
    <property type="molecule type" value="Genomic_DNA"/>
</dbReference>
<dbReference type="RefSeq" id="WP_011700426.1">
    <property type="nucleotide sequence ID" value="NC_008554.1"/>
</dbReference>
<dbReference type="SMR" id="A0LPE9"/>
<dbReference type="STRING" id="335543.Sfum_3631"/>
<dbReference type="KEGG" id="sfu:Sfum_3631"/>
<dbReference type="eggNOG" id="COG2052">
    <property type="taxonomic scope" value="Bacteria"/>
</dbReference>
<dbReference type="HOGENOM" id="CLU_165326_0_0_7"/>
<dbReference type="InParanoid" id="A0LPE9"/>
<dbReference type="OrthoDB" id="5432174at2"/>
<dbReference type="Proteomes" id="UP000001784">
    <property type="component" value="Chromosome"/>
</dbReference>
<dbReference type="HAMAP" id="MF_01503">
    <property type="entry name" value="RemA"/>
    <property type="match status" value="1"/>
</dbReference>
<dbReference type="InterPro" id="IPR007169">
    <property type="entry name" value="RemA-like"/>
</dbReference>
<dbReference type="NCBIfam" id="NF046064">
    <property type="entry name" value="MtxBflmRegRemA"/>
    <property type="match status" value="1"/>
</dbReference>
<dbReference type="NCBIfam" id="NF003315">
    <property type="entry name" value="PRK04323.1"/>
    <property type="match status" value="1"/>
</dbReference>
<dbReference type="PANTHER" id="PTHR38449:SF1">
    <property type="entry name" value="REGULATORY PROTEIN SSL2874-RELATED"/>
    <property type="match status" value="1"/>
</dbReference>
<dbReference type="PANTHER" id="PTHR38449">
    <property type="entry name" value="REGULATORY PROTEIN TM_1690-RELATED"/>
    <property type="match status" value="1"/>
</dbReference>
<dbReference type="Pfam" id="PF04025">
    <property type="entry name" value="RemA-like"/>
    <property type="match status" value="1"/>
</dbReference>
<reference key="1">
    <citation type="submission" date="2006-10" db="EMBL/GenBank/DDBJ databases">
        <title>Complete sequence of Syntrophobacter fumaroxidans MPOB.</title>
        <authorList>
            <consortium name="US DOE Joint Genome Institute"/>
            <person name="Copeland A."/>
            <person name="Lucas S."/>
            <person name="Lapidus A."/>
            <person name="Barry K."/>
            <person name="Detter J.C."/>
            <person name="Glavina del Rio T."/>
            <person name="Hammon N."/>
            <person name="Israni S."/>
            <person name="Pitluck S."/>
            <person name="Goltsman E.G."/>
            <person name="Martinez M."/>
            <person name="Schmutz J."/>
            <person name="Larimer F."/>
            <person name="Land M."/>
            <person name="Hauser L."/>
            <person name="Kyrpides N."/>
            <person name="Kim E."/>
            <person name="Boone D.R."/>
            <person name="Brockman F."/>
            <person name="Culley D."/>
            <person name="Ferry J."/>
            <person name="Gunsalus R."/>
            <person name="McInerney M.J."/>
            <person name="Morrison M."/>
            <person name="Plugge C."/>
            <person name="Rohlin L."/>
            <person name="Scholten J."/>
            <person name="Sieber J."/>
            <person name="Stams A.J.M."/>
            <person name="Worm P."/>
            <person name="Henstra A.M."/>
            <person name="Richardson P."/>
        </authorList>
    </citation>
    <scope>NUCLEOTIDE SEQUENCE [LARGE SCALE GENOMIC DNA]</scope>
    <source>
        <strain>DSM 10017 / MPOB</strain>
    </source>
</reference>
<organism>
    <name type="scientific">Syntrophobacter fumaroxidans (strain DSM 10017 / MPOB)</name>
    <dbReference type="NCBI Taxonomy" id="335543"/>
    <lineage>
        <taxon>Bacteria</taxon>
        <taxon>Pseudomonadati</taxon>
        <taxon>Thermodesulfobacteriota</taxon>
        <taxon>Syntrophobacteria</taxon>
        <taxon>Syntrophobacterales</taxon>
        <taxon>Syntrophobacteraceae</taxon>
        <taxon>Syntrophobacter</taxon>
    </lineage>
</organism>
<evidence type="ECO:0000255" key="1">
    <source>
        <dbReference type="HAMAP-Rule" id="MF_01503"/>
    </source>
</evidence>
<sequence>MEVKLLNIGFGNTVIANRVIAIVSPASAPMKRLKEDARQANKLIDATMGRRTRAIIVTDSDHIILSGVQAETIAQRLLTEGGVRDVNLLKQAKD</sequence>
<feature type="chain" id="PRO_0000294258" description="Putative regulatory protein Sfum_3631">
    <location>
        <begin position="1"/>
        <end position="94"/>
    </location>
</feature>
<proteinExistence type="inferred from homology"/>